<dbReference type="EMBL" id="U00089">
    <property type="protein sequence ID" value="AAB95671.1"/>
    <property type="molecule type" value="Genomic_DNA"/>
</dbReference>
<dbReference type="PIR" id="S73349">
    <property type="entry name" value="S73349"/>
</dbReference>
<dbReference type="RefSeq" id="NP_109819.1">
    <property type="nucleotide sequence ID" value="NC_000912.1"/>
</dbReference>
<dbReference type="RefSeq" id="WP_010874488.1">
    <property type="nucleotide sequence ID" value="NZ_OU342337.1"/>
</dbReference>
<dbReference type="SMR" id="P75267"/>
<dbReference type="STRING" id="272634.MPN_131"/>
<dbReference type="EnsemblBacteria" id="AAB95671">
    <property type="protein sequence ID" value="AAB95671"/>
    <property type="gene ID" value="MPN_131"/>
</dbReference>
<dbReference type="KEGG" id="mpn:MPN_131"/>
<dbReference type="PATRIC" id="fig|272634.6.peg.143"/>
<dbReference type="HOGENOM" id="CLU_108892_0_0_14"/>
<dbReference type="BioCyc" id="MPNE272634:G1GJ3-221-MONOMER"/>
<dbReference type="Proteomes" id="UP000000808">
    <property type="component" value="Chromosome"/>
</dbReference>
<evidence type="ECO:0000256" key="1">
    <source>
        <dbReference type="SAM" id="MobiDB-lite"/>
    </source>
</evidence>
<evidence type="ECO:0000305" key="2"/>
<gene>
    <name type="ordered locus">MPN_131</name>
    <name type="ORF">E07_orf221V</name>
    <name type="ORF">MP023</name>
</gene>
<keyword id="KW-1185">Reference proteome</keyword>
<sequence length="221" mass="23200">MLDYVPWIGNGYRYGNNHRGSNSSTSGVTTQGQSQNASSNEPAPTFSNVGVGLKANVNGTLSGSRTTPNQQGTPWLTLDQANLQLWTGAGWRNDKNGQSDENYTNFASAKGSTNQQGSTTGGSAGNPDSLKQDKADKSGDSVTVAEATSGDNLTNYTNLPPTSPPHPTDRTRCHSPTRTTPSGCSCSCAACWAASRCWSIRVGKMITVSLIPPTKNGLTPN</sequence>
<proteinExistence type="uncertain"/>
<organism>
    <name type="scientific">Mycoplasma pneumoniae (strain ATCC 29342 / M129 / Subtype 1)</name>
    <name type="common">Mycoplasmoides pneumoniae</name>
    <dbReference type="NCBI Taxonomy" id="272634"/>
    <lineage>
        <taxon>Bacteria</taxon>
        <taxon>Bacillati</taxon>
        <taxon>Mycoplasmatota</taxon>
        <taxon>Mycoplasmoidales</taxon>
        <taxon>Mycoplasmoidaceae</taxon>
        <taxon>Mycoplasmoides</taxon>
    </lineage>
</organism>
<name>Y131_MYCPN</name>
<reference key="1">
    <citation type="journal article" date="1996" name="Nucleic Acids Res.">
        <title>Complete sequence analysis of the genome of the bacterium Mycoplasma pneumoniae.</title>
        <authorList>
            <person name="Himmelreich R."/>
            <person name="Hilbert H."/>
            <person name="Plagens H."/>
            <person name="Pirkl E."/>
            <person name="Li B.-C."/>
            <person name="Herrmann R."/>
        </authorList>
    </citation>
    <scope>NUCLEOTIDE SEQUENCE [LARGE SCALE GENOMIC DNA]</scope>
    <source>
        <strain>ATCC 29342 / M129 / Subtype 1</strain>
    </source>
</reference>
<comment type="similarity">
    <text evidence="2">Belongs to the adhesin P1 family.</text>
</comment>
<comment type="caution">
    <text evidence="2">Could be the product of a pseudogene.</text>
</comment>
<accession>P75267</accession>
<feature type="chain" id="PRO_0000210707" description="Putative adhesin P1-like protein MPN_131">
    <location>
        <begin position="1"/>
        <end position="221"/>
    </location>
</feature>
<feature type="region of interest" description="Disordered" evidence="1">
    <location>
        <begin position="13"/>
        <end position="51"/>
    </location>
</feature>
<feature type="region of interest" description="Disordered" evidence="1">
    <location>
        <begin position="90"/>
        <end position="183"/>
    </location>
</feature>
<feature type="compositionally biased region" description="Low complexity" evidence="1">
    <location>
        <begin position="13"/>
        <end position="36"/>
    </location>
</feature>
<feature type="compositionally biased region" description="Polar residues" evidence="1">
    <location>
        <begin position="37"/>
        <end position="48"/>
    </location>
</feature>
<feature type="compositionally biased region" description="Basic and acidic residues" evidence="1">
    <location>
        <begin position="130"/>
        <end position="139"/>
    </location>
</feature>
<feature type="compositionally biased region" description="Polar residues" evidence="1">
    <location>
        <begin position="149"/>
        <end position="160"/>
    </location>
</feature>
<feature type="compositionally biased region" description="Polar residues" evidence="1">
    <location>
        <begin position="174"/>
        <end position="183"/>
    </location>
</feature>
<protein>
    <recommendedName>
        <fullName>Putative adhesin P1-like protein MPN_131</fullName>
    </recommendedName>
</protein>